<proteinExistence type="inferred from homology"/>
<gene>
    <name type="ordered locus">BA_5160</name>
    <name type="ordered locus">GBAA_5160</name>
    <name type="ordered locus">BAS4797</name>
</gene>
<accession>Q81XS0</accession>
<accession>Q6HRJ8</accession>
<accession>Q6KKW3</accession>
<organism>
    <name type="scientific">Bacillus anthracis</name>
    <dbReference type="NCBI Taxonomy" id="1392"/>
    <lineage>
        <taxon>Bacteria</taxon>
        <taxon>Bacillati</taxon>
        <taxon>Bacillota</taxon>
        <taxon>Bacilli</taxon>
        <taxon>Bacillales</taxon>
        <taxon>Bacillaceae</taxon>
        <taxon>Bacillus</taxon>
        <taxon>Bacillus cereus group</taxon>
    </lineage>
</organism>
<dbReference type="EC" id="1.18.1.2" evidence="1"/>
<dbReference type="EMBL" id="AE016879">
    <property type="protein sequence ID" value="AAP28832.1"/>
    <property type="molecule type" value="Genomic_DNA"/>
</dbReference>
<dbReference type="EMBL" id="AE017334">
    <property type="protein sequence ID" value="AAT34289.1"/>
    <property type="molecule type" value="Genomic_DNA"/>
</dbReference>
<dbReference type="EMBL" id="AE017225">
    <property type="protein sequence ID" value="AAT57090.1"/>
    <property type="molecule type" value="Genomic_DNA"/>
</dbReference>
<dbReference type="RefSeq" id="NP_847346.1">
    <property type="nucleotide sequence ID" value="NC_003997.3"/>
</dbReference>
<dbReference type="RefSeq" id="YP_031040.1">
    <property type="nucleotide sequence ID" value="NC_005945.1"/>
</dbReference>
<dbReference type="SMR" id="Q81XS0"/>
<dbReference type="IntAct" id="Q81XS0">
    <property type="interactions" value="3"/>
</dbReference>
<dbReference type="STRING" id="261594.GBAA_5160"/>
<dbReference type="DNASU" id="1084543"/>
<dbReference type="KEGG" id="ban:BA_5160"/>
<dbReference type="KEGG" id="bar:GBAA_5160"/>
<dbReference type="KEGG" id="bat:BAS4797"/>
<dbReference type="PATRIC" id="fig|198094.11.peg.5121"/>
<dbReference type="eggNOG" id="COG0492">
    <property type="taxonomic scope" value="Bacteria"/>
</dbReference>
<dbReference type="HOGENOM" id="CLU_031864_5_5_9"/>
<dbReference type="OMA" id="TLMCQSA"/>
<dbReference type="Proteomes" id="UP000000427">
    <property type="component" value="Chromosome"/>
</dbReference>
<dbReference type="Proteomes" id="UP000000594">
    <property type="component" value="Chromosome"/>
</dbReference>
<dbReference type="GO" id="GO:0004324">
    <property type="term" value="F:ferredoxin-NADP+ reductase activity"/>
    <property type="evidence" value="ECO:0007669"/>
    <property type="project" value="UniProtKB-UniRule"/>
</dbReference>
<dbReference type="GO" id="GO:0050660">
    <property type="term" value="F:flavin adenine dinucleotide binding"/>
    <property type="evidence" value="ECO:0007669"/>
    <property type="project" value="UniProtKB-UniRule"/>
</dbReference>
<dbReference type="GO" id="GO:0050661">
    <property type="term" value="F:NADP binding"/>
    <property type="evidence" value="ECO:0007669"/>
    <property type="project" value="UniProtKB-UniRule"/>
</dbReference>
<dbReference type="Gene3D" id="3.50.50.60">
    <property type="entry name" value="FAD/NAD(P)-binding domain"/>
    <property type="match status" value="2"/>
</dbReference>
<dbReference type="HAMAP" id="MF_01685">
    <property type="entry name" value="FENR2"/>
    <property type="match status" value="1"/>
</dbReference>
<dbReference type="InterPro" id="IPR036188">
    <property type="entry name" value="FAD/NAD-bd_sf"/>
</dbReference>
<dbReference type="InterPro" id="IPR023753">
    <property type="entry name" value="FAD/NAD-binding_dom"/>
</dbReference>
<dbReference type="InterPro" id="IPR022890">
    <property type="entry name" value="Fd--NADP_Rdtase_type_2"/>
</dbReference>
<dbReference type="InterPro" id="IPR050097">
    <property type="entry name" value="Ferredoxin-NADP_redctase_2"/>
</dbReference>
<dbReference type="PANTHER" id="PTHR48105">
    <property type="entry name" value="THIOREDOXIN REDUCTASE 1-RELATED-RELATED"/>
    <property type="match status" value="1"/>
</dbReference>
<dbReference type="Pfam" id="PF07992">
    <property type="entry name" value="Pyr_redox_2"/>
    <property type="match status" value="1"/>
</dbReference>
<dbReference type="PRINTS" id="PR00368">
    <property type="entry name" value="FADPNR"/>
</dbReference>
<dbReference type="PRINTS" id="PR00469">
    <property type="entry name" value="PNDRDTASEII"/>
</dbReference>
<dbReference type="SUPFAM" id="SSF51905">
    <property type="entry name" value="FAD/NAD(P)-binding domain"/>
    <property type="match status" value="1"/>
</dbReference>
<feature type="chain" id="PRO_0000364787" description="Ferredoxin--NADP reductase 2">
    <location>
        <begin position="1"/>
        <end position="331"/>
    </location>
</feature>
<feature type="binding site" evidence="1">
    <location>
        <position position="20"/>
    </location>
    <ligand>
        <name>FAD</name>
        <dbReference type="ChEBI" id="CHEBI:57692"/>
    </ligand>
</feature>
<feature type="binding site" evidence="1">
    <location>
        <position position="39"/>
    </location>
    <ligand>
        <name>FAD</name>
        <dbReference type="ChEBI" id="CHEBI:57692"/>
    </ligand>
</feature>
<feature type="binding site" evidence="1">
    <location>
        <position position="47"/>
    </location>
    <ligand>
        <name>FAD</name>
        <dbReference type="ChEBI" id="CHEBI:57692"/>
    </ligand>
</feature>
<feature type="binding site" evidence="1">
    <location>
        <position position="52"/>
    </location>
    <ligand>
        <name>FAD</name>
        <dbReference type="ChEBI" id="CHEBI:57692"/>
    </ligand>
</feature>
<feature type="binding site" evidence="1">
    <location>
        <position position="92"/>
    </location>
    <ligand>
        <name>FAD</name>
        <dbReference type="ChEBI" id="CHEBI:57692"/>
    </ligand>
</feature>
<feature type="binding site" evidence="1">
    <location>
        <position position="126"/>
    </location>
    <ligand>
        <name>FAD</name>
        <dbReference type="ChEBI" id="CHEBI:57692"/>
    </ligand>
</feature>
<feature type="binding site" evidence="1">
    <location>
        <position position="287"/>
    </location>
    <ligand>
        <name>FAD</name>
        <dbReference type="ChEBI" id="CHEBI:57692"/>
    </ligand>
</feature>
<feature type="binding site" evidence="1">
    <location>
        <position position="328"/>
    </location>
    <ligand>
        <name>FAD</name>
        <dbReference type="ChEBI" id="CHEBI:57692"/>
    </ligand>
</feature>
<keyword id="KW-0274">FAD</keyword>
<keyword id="KW-0285">Flavoprotein</keyword>
<keyword id="KW-0521">NADP</keyword>
<keyword id="KW-0560">Oxidoreductase</keyword>
<keyword id="KW-1185">Reference proteome</keyword>
<reference key="1">
    <citation type="journal article" date="2003" name="Nature">
        <title>The genome sequence of Bacillus anthracis Ames and comparison to closely related bacteria.</title>
        <authorList>
            <person name="Read T.D."/>
            <person name="Peterson S.N."/>
            <person name="Tourasse N.J."/>
            <person name="Baillie L.W."/>
            <person name="Paulsen I.T."/>
            <person name="Nelson K.E."/>
            <person name="Tettelin H."/>
            <person name="Fouts D.E."/>
            <person name="Eisen J.A."/>
            <person name="Gill S.R."/>
            <person name="Holtzapple E.K."/>
            <person name="Okstad O.A."/>
            <person name="Helgason E."/>
            <person name="Rilstone J."/>
            <person name="Wu M."/>
            <person name="Kolonay J.F."/>
            <person name="Beanan M.J."/>
            <person name="Dodson R.J."/>
            <person name="Brinkac L.M."/>
            <person name="Gwinn M.L."/>
            <person name="DeBoy R.T."/>
            <person name="Madpu R."/>
            <person name="Daugherty S.C."/>
            <person name="Durkin A.S."/>
            <person name="Haft D.H."/>
            <person name="Nelson W.C."/>
            <person name="Peterson J.D."/>
            <person name="Pop M."/>
            <person name="Khouri H.M."/>
            <person name="Radune D."/>
            <person name="Benton J.L."/>
            <person name="Mahamoud Y."/>
            <person name="Jiang L."/>
            <person name="Hance I.R."/>
            <person name="Weidman J.F."/>
            <person name="Berry K.J."/>
            <person name="Plaut R.D."/>
            <person name="Wolf A.M."/>
            <person name="Watkins K.L."/>
            <person name="Nierman W.C."/>
            <person name="Hazen A."/>
            <person name="Cline R.T."/>
            <person name="Redmond C."/>
            <person name="Thwaite J.E."/>
            <person name="White O."/>
            <person name="Salzberg S.L."/>
            <person name="Thomason B."/>
            <person name="Friedlander A.M."/>
            <person name="Koehler T.M."/>
            <person name="Hanna P.C."/>
            <person name="Kolstoe A.-B."/>
            <person name="Fraser C.M."/>
        </authorList>
    </citation>
    <scope>NUCLEOTIDE SEQUENCE [LARGE SCALE GENOMIC DNA]</scope>
    <source>
        <strain>Ames / isolate Porton</strain>
    </source>
</reference>
<reference key="2">
    <citation type="submission" date="2004-01" db="EMBL/GenBank/DDBJ databases">
        <title>Complete genome sequence of Bacillus anthracis Sterne.</title>
        <authorList>
            <person name="Brettin T.S."/>
            <person name="Bruce D."/>
            <person name="Challacombe J.F."/>
            <person name="Gilna P."/>
            <person name="Han C."/>
            <person name="Hill K."/>
            <person name="Hitchcock P."/>
            <person name="Jackson P."/>
            <person name="Keim P."/>
            <person name="Longmire J."/>
            <person name="Lucas S."/>
            <person name="Okinaka R."/>
            <person name="Richardson P."/>
            <person name="Rubin E."/>
            <person name="Tice H."/>
        </authorList>
    </citation>
    <scope>NUCLEOTIDE SEQUENCE [LARGE SCALE GENOMIC DNA]</scope>
    <source>
        <strain>Sterne</strain>
    </source>
</reference>
<reference key="3">
    <citation type="journal article" date="2009" name="J. Bacteriol.">
        <title>The complete genome sequence of Bacillus anthracis Ames 'Ancestor'.</title>
        <authorList>
            <person name="Ravel J."/>
            <person name="Jiang L."/>
            <person name="Stanley S.T."/>
            <person name="Wilson M.R."/>
            <person name="Decker R.S."/>
            <person name="Read T.D."/>
            <person name="Worsham P."/>
            <person name="Keim P.S."/>
            <person name="Salzberg S.L."/>
            <person name="Fraser-Liggett C.M."/>
            <person name="Rasko D.A."/>
        </authorList>
    </citation>
    <scope>NUCLEOTIDE SEQUENCE [LARGE SCALE GENOMIC DNA]</scope>
    <source>
        <strain>Ames ancestor</strain>
    </source>
</reference>
<sequence>MKVAENQKVYDITIIGGGPTGLFTAFYGGMRQASVKIIESLPQLGGQLSALYPEKYIYDVAGFPKVRAQELVDNLKEQMKKFDPTVCLEEAVDTLEKQADGIFKLVTNKQTHYSKSVIITAGNGAFQPRRLELEGTAKYEKKNLHYFVDDMNKFAGKRVVVFGGGDSAVDWTMMLEPIADKVTIVHRRDKFRAHEHSVESLMNSRAEVSTPYVPVELIGDDKIEQVVLQHVKTEEKIIIDVDDVIVNYGFVSSLGPIKNWGLDIQKNSILVNSKMETNIPGIYAAGDICTYEGKVKLIACGFGEAPTAVNNAKAYFDPNAKLQPMHSSSMF</sequence>
<protein>
    <recommendedName>
        <fullName evidence="1">Ferredoxin--NADP reductase 2</fullName>
        <shortName evidence="1">FNR 2</shortName>
        <shortName evidence="1">Fd-NADP(+) reductase 2</shortName>
        <ecNumber evidence="1">1.18.1.2</ecNumber>
    </recommendedName>
</protein>
<evidence type="ECO:0000255" key="1">
    <source>
        <dbReference type="HAMAP-Rule" id="MF_01685"/>
    </source>
</evidence>
<name>FENR2_BACAN</name>
<comment type="catalytic activity">
    <reaction evidence="1">
        <text>2 reduced [2Fe-2S]-[ferredoxin] + NADP(+) + H(+) = 2 oxidized [2Fe-2S]-[ferredoxin] + NADPH</text>
        <dbReference type="Rhea" id="RHEA:20125"/>
        <dbReference type="Rhea" id="RHEA-COMP:10000"/>
        <dbReference type="Rhea" id="RHEA-COMP:10001"/>
        <dbReference type="ChEBI" id="CHEBI:15378"/>
        <dbReference type="ChEBI" id="CHEBI:33737"/>
        <dbReference type="ChEBI" id="CHEBI:33738"/>
        <dbReference type="ChEBI" id="CHEBI:57783"/>
        <dbReference type="ChEBI" id="CHEBI:58349"/>
        <dbReference type="EC" id="1.18.1.2"/>
    </reaction>
</comment>
<comment type="cofactor">
    <cofactor evidence="1">
        <name>FAD</name>
        <dbReference type="ChEBI" id="CHEBI:57692"/>
    </cofactor>
    <text evidence="1">Binds 1 FAD per subunit.</text>
</comment>
<comment type="subunit">
    <text evidence="1">Homodimer.</text>
</comment>
<comment type="similarity">
    <text evidence="1">Belongs to the ferredoxin--NADP reductase type 2 family.</text>
</comment>